<accession>P68188</accession>
<accession>P02914</accession>
<accession>Q47348</accession>
<proteinExistence type="inferred from homology"/>
<feature type="chain" id="PRO_0000092476" description="Maltose/maltodextrin import ATP-binding protein MalK">
    <location>
        <begin position="1"/>
        <end position="371"/>
    </location>
</feature>
<feature type="domain" description="ABC transporter" evidence="1">
    <location>
        <begin position="4"/>
        <end position="234"/>
    </location>
</feature>
<feature type="binding site" evidence="1">
    <location>
        <begin position="36"/>
        <end position="43"/>
    </location>
    <ligand>
        <name>ATP</name>
        <dbReference type="ChEBI" id="CHEBI:30616"/>
    </ligand>
</feature>
<evidence type="ECO:0000255" key="1">
    <source>
        <dbReference type="HAMAP-Rule" id="MF_01709"/>
    </source>
</evidence>
<reference key="1">
    <citation type="journal article" date="2001" name="Nature">
        <title>Genome sequence of enterohaemorrhagic Escherichia coli O157:H7.</title>
        <authorList>
            <person name="Perna N.T."/>
            <person name="Plunkett G. III"/>
            <person name="Burland V."/>
            <person name="Mau B."/>
            <person name="Glasner J.D."/>
            <person name="Rose D.J."/>
            <person name="Mayhew G.F."/>
            <person name="Evans P.S."/>
            <person name="Gregor J."/>
            <person name="Kirkpatrick H.A."/>
            <person name="Posfai G."/>
            <person name="Hackett J."/>
            <person name="Klink S."/>
            <person name="Boutin A."/>
            <person name="Shao Y."/>
            <person name="Miller L."/>
            <person name="Grotbeck E.J."/>
            <person name="Davis N.W."/>
            <person name="Lim A."/>
            <person name="Dimalanta E.T."/>
            <person name="Potamousis K."/>
            <person name="Apodaca J."/>
            <person name="Anantharaman T.S."/>
            <person name="Lin J."/>
            <person name="Yen G."/>
            <person name="Schwartz D.C."/>
            <person name="Welch R.A."/>
            <person name="Blattner F.R."/>
        </authorList>
    </citation>
    <scope>NUCLEOTIDE SEQUENCE [LARGE SCALE GENOMIC DNA]</scope>
    <source>
        <strain>O157:H7 / EDL933 / ATCC 700927 / EHEC</strain>
    </source>
</reference>
<reference key="2">
    <citation type="journal article" date="2001" name="DNA Res.">
        <title>Complete genome sequence of enterohemorrhagic Escherichia coli O157:H7 and genomic comparison with a laboratory strain K-12.</title>
        <authorList>
            <person name="Hayashi T."/>
            <person name="Makino K."/>
            <person name="Ohnishi M."/>
            <person name="Kurokawa K."/>
            <person name="Ishii K."/>
            <person name="Yokoyama K."/>
            <person name="Han C.-G."/>
            <person name="Ohtsubo E."/>
            <person name="Nakayama K."/>
            <person name="Murata T."/>
            <person name="Tanaka M."/>
            <person name="Tobe T."/>
            <person name="Iida T."/>
            <person name="Takami H."/>
            <person name="Honda T."/>
            <person name="Sasakawa C."/>
            <person name="Ogasawara N."/>
            <person name="Yasunaga T."/>
            <person name="Kuhara S."/>
            <person name="Shiba T."/>
            <person name="Hattori M."/>
            <person name="Shinagawa H."/>
        </authorList>
    </citation>
    <scope>NUCLEOTIDE SEQUENCE [LARGE SCALE GENOMIC DNA]</scope>
    <source>
        <strain>O157:H7 / Sakai / RIMD 0509952 / EHEC</strain>
    </source>
</reference>
<organism>
    <name type="scientific">Escherichia coli O157:H7</name>
    <dbReference type="NCBI Taxonomy" id="83334"/>
    <lineage>
        <taxon>Bacteria</taxon>
        <taxon>Pseudomonadati</taxon>
        <taxon>Pseudomonadota</taxon>
        <taxon>Gammaproteobacteria</taxon>
        <taxon>Enterobacterales</taxon>
        <taxon>Enterobacteriaceae</taxon>
        <taxon>Escherichia</taxon>
    </lineage>
</organism>
<sequence length="371" mass="40990">MASVQLQNVTKAWGEVVVSKDINLDIHEGEFVVFVGPSGCGKSTLLRMIAGLETITSGDLFIGEKRMNDTPPAERGVGMVFQSYALYPHLSVAENMSFGLKLAGAKKEVINQRVNQVAEVLQLAHLLDRKPKALSGGQRQRVAIGRTLVAEPSVFLLDEPLSNLDAALRVQMRIEISRLHKRLGRTMIYVTHDQVEAMTLADKIVVLDAGRVAQVGKPLELYHYPADRFVAGFIGSPKMNFLPVKVTATAIDQVQVELPMPNRQQVWLPVESRDVQVGANMSLGIRPEHLLPSDIADVILEGEVQVVEQLGNETQIHIQIPSIRQNLVYRQNDVVLVEEGATFAIGLPPERCHLFREDGTACRRLHKEPGV</sequence>
<protein>
    <recommendedName>
        <fullName evidence="1">Maltose/maltodextrin import ATP-binding protein MalK</fullName>
        <ecNumber evidence="1">7.5.2.1</ecNumber>
    </recommendedName>
</protein>
<keyword id="KW-0067">ATP-binding</keyword>
<keyword id="KW-0997">Cell inner membrane</keyword>
<keyword id="KW-1003">Cell membrane</keyword>
<keyword id="KW-0472">Membrane</keyword>
<keyword id="KW-0547">Nucleotide-binding</keyword>
<keyword id="KW-1185">Reference proteome</keyword>
<keyword id="KW-0762">Sugar transport</keyword>
<keyword id="KW-1278">Translocase</keyword>
<keyword id="KW-0813">Transport</keyword>
<comment type="function">
    <text evidence="1">Part of the ABC transporter complex MalEFGK involved in maltose/maltodextrin import. Responsible for energy coupling to the transport system.</text>
</comment>
<comment type="catalytic activity">
    <reaction evidence="1">
        <text>D-maltose(out) + ATP + H2O = D-maltose(in) + ADP + phosphate + H(+)</text>
        <dbReference type="Rhea" id="RHEA:22132"/>
        <dbReference type="ChEBI" id="CHEBI:15377"/>
        <dbReference type="ChEBI" id="CHEBI:15378"/>
        <dbReference type="ChEBI" id="CHEBI:17306"/>
        <dbReference type="ChEBI" id="CHEBI:30616"/>
        <dbReference type="ChEBI" id="CHEBI:43474"/>
        <dbReference type="ChEBI" id="CHEBI:456216"/>
        <dbReference type="EC" id="7.5.2.1"/>
    </reaction>
</comment>
<comment type="subunit">
    <text evidence="1">The complex is composed of two ATP-binding proteins (MalK), two transmembrane proteins (MalG and MalK) and a solute-binding protein (MalE).</text>
</comment>
<comment type="subcellular location">
    <subcellularLocation>
        <location evidence="1">Cell inner membrane</location>
        <topology evidence="1">Peripheral membrane protein</topology>
    </subcellularLocation>
</comment>
<comment type="similarity">
    <text evidence="1">Belongs to the ABC transporter superfamily. Maltooligosaccharide importer (TC 3.A.1.1.1) family.</text>
</comment>
<gene>
    <name evidence="1" type="primary">malK</name>
    <name type="ordered locus">Z5633</name>
    <name type="ordered locus">ECs5018</name>
</gene>
<name>MALK_ECO57</name>
<dbReference type="EC" id="7.5.2.1" evidence="1"/>
<dbReference type="EMBL" id="AE005174">
    <property type="protein sequence ID" value="AAG59234.1"/>
    <property type="molecule type" value="Genomic_DNA"/>
</dbReference>
<dbReference type="EMBL" id="BA000007">
    <property type="protein sequence ID" value="BAB38441.1"/>
    <property type="molecule type" value="Genomic_DNA"/>
</dbReference>
<dbReference type="PIR" id="B91256">
    <property type="entry name" value="B91256"/>
</dbReference>
<dbReference type="PIR" id="F86096">
    <property type="entry name" value="F86096"/>
</dbReference>
<dbReference type="RefSeq" id="NP_313045.1">
    <property type="nucleotide sequence ID" value="NC_002695.1"/>
</dbReference>
<dbReference type="RefSeq" id="WP_000179165.1">
    <property type="nucleotide sequence ID" value="NZ_VOAI01000027.1"/>
</dbReference>
<dbReference type="SMR" id="P68188"/>
<dbReference type="STRING" id="155864.Z5633"/>
<dbReference type="GeneID" id="914316"/>
<dbReference type="GeneID" id="93777800"/>
<dbReference type="KEGG" id="ece:Z5633"/>
<dbReference type="KEGG" id="ecs:ECs_5018"/>
<dbReference type="PATRIC" id="fig|386585.9.peg.5241"/>
<dbReference type="eggNOG" id="COG3842">
    <property type="taxonomic scope" value="Bacteria"/>
</dbReference>
<dbReference type="HOGENOM" id="CLU_000604_1_1_6"/>
<dbReference type="OMA" id="RCHLFKE"/>
<dbReference type="Proteomes" id="UP000000558">
    <property type="component" value="Chromosome"/>
</dbReference>
<dbReference type="Proteomes" id="UP000002519">
    <property type="component" value="Chromosome"/>
</dbReference>
<dbReference type="GO" id="GO:0055052">
    <property type="term" value="C:ATP-binding cassette (ABC) transporter complex, substrate-binding subunit-containing"/>
    <property type="evidence" value="ECO:0007669"/>
    <property type="project" value="TreeGrafter"/>
</dbReference>
<dbReference type="GO" id="GO:1990060">
    <property type="term" value="C:maltose transport complex"/>
    <property type="evidence" value="ECO:0007669"/>
    <property type="project" value="TreeGrafter"/>
</dbReference>
<dbReference type="GO" id="GO:0015423">
    <property type="term" value="F:ABC-type maltose transporter activity"/>
    <property type="evidence" value="ECO:0007669"/>
    <property type="project" value="UniProtKB-EC"/>
</dbReference>
<dbReference type="GO" id="GO:0005524">
    <property type="term" value="F:ATP binding"/>
    <property type="evidence" value="ECO:0007669"/>
    <property type="project" value="UniProtKB-KW"/>
</dbReference>
<dbReference type="GO" id="GO:0016887">
    <property type="term" value="F:ATP hydrolysis activity"/>
    <property type="evidence" value="ECO:0007669"/>
    <property type="project" value="InterPro"/>
</dbReference>
<dbReference type="CDD" id="cd03301">
    <property type="entry name" value="ABC_MalK_N"/>
    <property type="match status" value="1"/>
</dbReference>
<dbReference type="FunFam" id="3.40.50.300:FF:000042">
    <property type="entry name" value="Maltose/maltodextrin ABC transporter, ATP-binding protein"/>
    <property type="match status" value="1"/>
</dbReference>
<dbReference type="FunFam" id="2.40.50.100:FF:000014">
    <property type="entry name" value="Maltose/maltodextrin import ATP-binding protein MalK"/>
    <property type="match status" value="1"/>
</dbReference>
<dbReference type="FunFam" id="2.40.50.140:FF:000070">
    <property type="entry name" value="Maltose/maltodextrin import ATP-binding protein MalK"/>
    <property type="match status" value="1"/>
</dbReference>
<dbReference type="Gene3D" id="2.40.50.100">
    <property type="match status" value="1"/>
</dbReference>
<dbReference type="Gene3D" id="2.40.50.140">
    <property type="entry name" value="Nucleic acid-binding proteins"/>
    <property type="match status" value="1"/>
</dbReference>
<dbReference type="Gene3D" id="3.40.50.300">
    <property type="entry name" value="P-loop containing nucleotide triphosphate hydrolases"/>
    <property type="match status" value="1"/>
</dbReference>
<dbReference type="InterPro" id="IPR003593">
    <property type="entry name" value="AAA+_ATPase"/>
</dbReference>
<dbReference type="InterPro" id="IPR003439">
    <property type="entry name" value="ABC_transporter-like_ATP-bd"/>
</dbReference>
<dbReference type="InterPro" id="IPR017871">
    <property type="entry name" value="ABC_transporter-like_CS"/>
</dbReference>
<dbReference type="InterPro" id="IPR015855">
    <property type="entry name" value="ABC_transpr_MalK-like"/>
</dbReference>
<dbReference type="InterPro" id="IPR047641">
    <property type="entry name" value="ABC_transpr_MalK/UgpC-like"/>
</dbReference>
<dbReference type="InterPro" id="IPR008995">
    <property type="entry name" value="Mo/tungstate-bd_C_term_dom"/>
</dbReference>
<dbReference type="InterPro" id="IPR012340">
    <property type="entry name" value="NA-bd_OB-fold"/>
</dbReference>
<dbReference type="InterPro" id="IPR027417">
    <property type="entry name" value="P-loop_NTPase"/>
</dbReference>
<dbReference type="InterPro" id="IPR013611">
    <property type="entry name" value="Transp-assoc_OB_typ2"/>
</dbReference>
<dbReference type="NCBIfam" id="NF008233">
    <property type="entry name" value="PRK11000.1"/>
    <property type="match status" value="1"/>
</dbReference>
<dbReference type="NCBIfam" id="NF008653">
    <property type="entry name" value="PRK11650.1"/>
    <property type="match status" value="1"/>
</dbReference>
<dbReference type="PANTHER" id="PTHR43875">
    <property type="entry name" value="MALTODEXTRIN IMPORT ATP-BINDING PROTEIN MSMX"/>
    <property type="match status" value="1"/>
</dbReference>
<dbReference type="PANTHER" id="PTHR43875:SF3">
    <property type="entry name" value="MALTOSE_MALTODEXTRIN IMPORT ATP-BINDING PROTEIN MALK"/>
    <property type="match status" value="1"/>
</dbReference>
<dbReference type="Pfam" id="PF00005">
    <property type="entry name" value="ABC_tran"/>
    <property type="match status" value="1"/>
</dbReference>
<dbReference type="Pfam" id="PF08402">
    <property type="entry name" value="TOBE_2"/>
    <property type="match status" value="1"/>
</dbReference>
<dbReference type="SMART" id="SM00382">
    <property type="entry name" value="AAA"/>
    <property type="match status" value="1"/>
</dbReference>
<dbReference type="SUPFAM" id="SSF50331">
    <property type="entry name" value="MOP-like"/>
    <property type="match status" value="1"/>
</dbReference>
<dbReference type="SUPFAM" id="SSF52540">
    <property type="entry name" value="P-loop containing nucleoside triphosphate hydrolases"/>
    <property type="match status" value="1"/>
</dbReference>
<dbReference type="PROSITE" id="PS00211">
    <property type="entry name" value="ABC_TRANSPORTER_1"/>
    <property type="match status" value="1"/>
</dbReference>
<dbReference type="PROSITE" id="PS50893">
    <property type="entry name" value="ABC_TRANSPORTER_2"/>
    <property type="match status" value="1"/>
</dbReference>
<dbReference type="PROSITE" id="PS51245">
    <property type="entry name" value="MALK"/>
    <property type="match status" value="1"/>
</dbReference>